<protein>
    <recommendedName>
        <fullName evidence="1">Ribosomal protein uS12 methylthiotransferase RimO</fullName>
        <shortName evidence="1">uS12 MTTase</shortName>
        <shortName evidence="1">uS12 methylthiotransferase</shortName>
        <ecNumber evidence="1">2.8.4.4</ecNumber>
    </recommendedName>
    <alternativeName>
        <fullName evidence="1">Ribosomal protein uS12 (aspartate-C(3))-methylthiotransferase</fullName>
    </alternativeName>
    <alternativeName>
        <fullName evidence="1">Ribosome maturation factor RimO</fullName>
    </alternativeName>
</protein>
<sequence length="441" mass="49582">MSKVTPQPKIGFVSLGCPKNLVDSERILTELRTEGYDVVPSYDDADMVIVNTCGFIDSAVQESLEAIGEALNENGKVIVTGCLGAKEDQIREVHPKVLEITGPHSYEQVLEHVHHYVPKPKHNPFLSLVPEQGVKLTPRHYAYLKISEGCNHRCTFCIIPSMRGDLVSRPIGEVLSEAKRLVDAGVKEILVISQDTSAYGVDVKHRTGFHNGEPVKTSMVSLCEQLSKLGIWTRLHYVYPYPHVDDVIPLMAEGKILPYLDIPLQHASPRILKLMKRPGSVDRQLARIKQWREICPELTLRSTFIVGFPGETEEDFQMLLDFLKEARLDRVGCFKYSPVEGADANALPDQVPEEVKEERWNRFMQLQQQISAERLQEKVGREILVIIDEVDEEGAIGRSMADAPEIDGAVYLNGETNVKPGDILRVKVEHADEYDLWGSRV</sequence>
<feature type="chain" id="PRO_0000374822" description="Ribosomal protein uS12 methylthiotransferase RimO">
    <location>
        <begin position="1"/>
        <end position="441"/>
    </location>
</feature>
<feature type="domain" description="MTTase N-terminal" evidence="1">
    <location>
        <begin position="8"/>
        <end position="118"/>
    </location>
</feature>
<feature type="domain" description="Radical SAM core" evidence="2">
    <location>
        <begin position="136"/>
        <end position="373"/>
    </location>
</feature>
<feature type="domain" description="TRAM" evidence="1">
    <location>
        <begin position="376"/>
        <end position="441"/>
    </location>
</feature>
<feature type="binding site" evidence="1">
    <location>
        <position position="17"/>
    </location>
    <ligand>
        <name>[4Fe-4S] cluster</name>
        <dbReference type="ChEBI" id="CHEBI:49883"/>
        <label>1</label>
    </ligand>
</feature>
<feature type="binding site" evidence="1">
    <location>
        <position position="53"/>
    </location>
    <ligand>
        <name>[4Fe-4S] cluster</name>
        <dbReference type="ChEBI" id="CHEBI:49883"/>
        <label>1</label>
    </ligand>
</feature>
<feature type="binding site" evidence="1">
    <location>
        <position position="82"/>
    </location>
    <ligand>
        <name>[4Fe-4S] cluster</name>
        <dbReference type="ChEBI" id="CHEBI:49883"/>
        <label>1</label>
    </ligand>
</feature>
<feature type="binding site" evidence="1">
    <location>
        <position position="150"/>
    </location>
    <ligand>
        <name>[4Fe-4S] cluster</name>
        <dbReference type="ChEBI" id="CHEBI:49883"/>
        <label>2</label>
        <note>4Fe-4S-S-AdoMet</note>
    </ligand>
</feature>
<feature type="binding site" evidence="1">
    <location>
        <position position="154"/>
    </location>
    <ligand>
        <name>[4Fe-4S] cluster</name>
        <dbReference type="ChEBI" id="CHEBI:49883"/>
        <label>2</label>
        <note>4Fe-4S-S-AdoMet</note>
    </ligand>
</feature>
<feature type="binding site" evidence="1">
    <location>
        <position position="157"/>
    </location>
    <ligand>
        <name>[4Fe-4S] cluster</name>
        <dbReference type="ChEBI" id="CHEBI:49883"/>
        <label>2</label>
        <note>4Fe-4S-S-AdoMet</note>
    </ligand>
</feature>
<dbReference type="EC" id="2.8.4.4" evidence="1"/>
<dbReference type="EMBL" id="CP000800">
    <property type="protein sequence ID" value="ABV18245.1"/>
    <property type="molecule type" value="Genomic_DNA"/>
</dbReference>
<dbReference type="RefSeq" id="WP_000049367.1">
    <property type="nucleotide sequence ID" value="NC_009801.1"/>
</dbReference>
<dbReference type="SMR" id="A7ZJQ2"/>
<dbReference type="GeneID" id="75204700"/>
<dbReference type="KEGG" id="ecw:EcE24377A_0906"/>
<dbReference type="HOGENOM" id="CLU_018697_0_0_6"/>
<dbReference type="Proteomes" id="UP000001122">
    <property type="component" value="Chromosome"/>
</dbReference>
<dbReference type="GO" id="GO:0005829">
    <property type="term" value="C:cytosol"/>
    <property type="evidence" value="ECO:0007669"/>
    <property type="project" value="TreeGrafter"/>
</dbReference>
<dbReference type="GO" id="GO:0051539">
    <property type="term" value="F:4 iron, 4 sulfur cluster binding"/>
    <property type="evidence" value="ECO:0007669"/>
    <property type="project" value="UniProtKB-UniRule"/>
</dbReference>
<dbReference type="GO" id="GO:0035599">
    <property type="term" value="F:aspartic acid methylthiotransferase activity"/>
    <property type="evidence" value="ECO:0007669"/>
    <property type="project" value="TreeGrafter"/>
</dbReference>
<dbReference type="GO" id="GO:0046872">
    <property type="term" value="F:metal ion binding"/>
    <property type="evidence" value="ECO:0007669"/>
    <property type="project" value="UniProtKB-KW"/>
</dbReference>
<dbReference type="GO" id="GO:0103039">
    <property type="term" value="F:protein methylthiotransferase activity"/>
    <property type="evidence" value="ECO:0007669"/>
    <property type="project" value="UniProtKB-EC"/>
</dbReference>
<dbReference type="GO" id="GO:0006400">
    <property type="term" value="P:tRNA modification"/>
    <property type="evidence" value="ECO:0007669"/>
    <property type="project" value="InterPro"/>
</dbReference>
<dbReference type="CDD" id="cd01335">
    <property type="entry name" value="Radical_SAM"/>
    <property type="match status" value="1"/>
</dbReference>
<dbReference type="FunFam" id="2.40.50.140:FF:000060">
    <property type="entry name" value="Ribosomal protein S12 methylthiotransferase RimO"/>
    <property type="match status" value="1"/>
</dbReference>
<dbReference type="FunFam" id="3.40.50.12160:FF:000002">
    <property type="entry name" value="Ribosomal protein S12 methylthiotransferase RimO"/>
    <property type="match status" value="1"/>
</dbReference>
<dbReference type="FunFam" id="3.80.30.20:FF:000001">
    <property type="entry name" value="tRNA-2-methylthio-N(6)-dimethylallyladenosine synthase 2"/>
    <property type="match status" value="1"/>
</dbReference>
<dbReference type="Gene3D" id="3.40.50.12160">
    <property type="entry name" value="Methylthiotransferase, N-terminal domain"/>
    <property type="match status" value="1"/>
</dbReference>
<dbReference type="Gene3D" id="2.40.50.140">
    <property type="entry name" value="Nucleic acid-binding proteins"/>
    <property type="match status" value="1"/>
</dbReference>
<dbReference type="Gene3D" id="3.80.30.20">
    <property type="entry name" value="tm_1862 like domain"/>
    <property type="match status" value="1"/>
</dbReference>
<dbReference type="HAMAP" id="MF_01865">
    <property type="entry name" value="MTTase_RimO"/>
    <property type="match status" value="1"/>
</dbReference>
<dbReference type="InterPro" id="IPR006638">
    <property type="entry name" value="Elp3/MiaA/NifB-like_rSAM"/>
</dbReference>
<dbReference type="InterPro" id="IPR005839">
    <property type="entry name" value="Methylthiotransferase"/>
</dbReference>
<dbReference type="InterPro" id="IPR020612">
    <property type="entry name" value="Methylthiotransferase_CS"/>
</dbReference>
<dbReference type="InterPro" id="IPR013848">
    <property type="entry name" value="Methylthiotransferase_N"/>
</dbReference>
<dbReference type="InterPro" id="IPR038135">
    <property type="entry name" value="Methylthiotransferase_N_sf"/>
</dbReference>
<dbReference type="InterPro" id="IPR012340">
    <property type="entry name" value="NA-bd_OB-fold"/>
</dbReference>
<dbReference type="InterPro" id="IPR005840">
    <property type="entry name" value="Ribosomal_uS12_MeSTrfase_RimO"/>
</dbReference>
<dbReference type="InterPro" id="IPR007197">
    <property type="entry name" value="rSAM"/>
</dbReference>
<dbReference type="InterPro" id="IPR023404">
    <property type="entry name" value="rSAM_horseshoe"/>
</dbReference>
<dbReference type="InterPro" id="IPR002792">
    <property type="entry name" value="TRAM_dom"/>
</dbReference>
<dbReference type="NCBIfam" id="TIGR01125">
    <property type="entry name" value="30S ribosomal protein S12 methylthiotransferase RimO"/>
    <property type="match status" value="1"/>
</dbReference>
<dbReference type="NCBIfam" id="TIGR00089">
    <property type="entry name" value="MiaB/RimO family radical SAM methylthiotransferase"/>
    <property type="match status" value="1"/>
</dbReference>
<dbReference type="PANTHER" id="PTHR43837">
    <property type="entry name" value="RIBOSOMAL PROTEIN S12 METHYLTHIOTRANSFERASE RIMO"/>
    <property type="match status" value="1"/>
</dbReference>
<dbReference type="PANTHER" id="PTHR43837:SF1">
    <property type="entry name" value="RIBOSOMAL PROTEIN US12 METHYLTHIOTRANSFERASE RIMO"/>
    <property type="match status" value="1"/>
</dbReference>
<dbReference type="Pfam" id="PF04055">
    <property type="entry name" value="Radical_SAM"/>
    <property type="match status" value="1"/>
</dbReference>
<dbReference type="Pfam" id="PF18693">
    <property type="entry name" value="TRAM_2"/>
    <property type="match status" value="1"/>
</dbReference>
<dbReference type="Pfam" id="PF00919">
    <property type="entry name" value="UPF0004"/>
    <property type="match status" value="1"/>
</dbReference>
<dbReference type="SFLD" id="SFLDG01082">
    <property type="entry name" value="B12-binding_domain_containing"/>
    <property type="match status" value="1"/>
</dbReference>
<dbReference type="SFLD" id="SFLDS00029">
    <property type="entry name" value="Radical_SAM"/>
    <property type="match status" value="1"/>
</dbReference>
<dbReference type="SFLD" id="SFLDF00274">
    <property type="entry name" value="ribosomal_protein_S12_methylth"/>
    <property type="match status" value="1"/>
</dbReference>
<dbReference type="SMART" id="SM00729">
    <property type="entry name" value="Elp3"/>
    <property type="match status" value="1"/>
</dbReference>
<dbReference type="SUPFAM" id="SSF102114">
    <property type="entry name" value="Radical SAM enzymes"/>
    <property type="match status" value="1"/>
</dbReference>
<dbReference type="PROSITE" id="PS51449">
    <property type="entry name" value="MTTASE_N"/>
    <property type="match status" value="1"/>
</dbReference>
<dbReference type="PROSITE" id="PS01278">
    <property type="entry name" value="MTTASE_RADICAL"/>
    <property type="match status" value="1"/>
</dbReference>
<dbReference type="PROSITE" id="PS51918">
    <property type="entry name" value="RADICAL_SAM"/>
    <property type="match status" value="1"/>
</dbReference>
<dbReference type="PROSITE" id="PS50926">
    <property type="entry name" value="TRAM"/>
    <property type="match status" value="1"/>
</dbReference>
<keyword id="KW-0004">4Fe-4S</keyword>
<keyword id="KW-0963">Cytoplasm</keyword>
<keyword id="KW-0408">Iron</keyword>
<keyword id="KW-0411">Iron-sulfur</keyword>
<keyword id="KW-0479">Metal-binding</keyword>
<keyword id="KW-1185">Reference proteome</keyword>
<keyword id="KW-0949">S-adenosyl-L-methionine</keyword>
<keyword id="KW-0808">Transferase</keyword>
<name>RIMO_ECO24</name>
<accession>A7ZJQ2</accession>
<evidence type="ECO:0000255" key="1">
    <source>
        <dbReference type="HAMAP-Rule" id="MF_01865"/>
    </source>
</evidence>
<evidence type="ECO:0000255" key="2">
    <source>
        <dbReference type="PROSITE-ProRule" id="PRU01266"/>
    </source>
</evidence>
<comment type="function">
    <text evidence="1">Catalyzes the methylthiolation of an aspartic acid residue of ribosomal protein uS12.</text>
</comment>
<comment type="catalytic activity">
    <reaction evidence="1">
        <text>L-aspartate(89)-[ribosomal protein uS12]-hydrogen + (sulfur carrier)-SH + AH2 + 2 S-adenosyl-L-methionine = 3-methylsulfanyl-L-aspartate(89)-[ribosomal protein uS12]-hydrogen + (sulfur carrier)-H + 5'-deoxyadenosine + L-methionine + A + S-adenosyl-L-homocysteine + 2 H(+)</text>
        <dbReference type="Rhea" id="RHEA:37087"/>
        <dbReference type="Rhea" id="RHEA-COMP:10460"/>
        <dbReference type="Rhea" id="RHEA-COMP:10461"/>
        <dbReference type="Rhea" id="RHEA-COMP:14737"/>
        <dbReference type="Rhea" id="RHEA-COMP:14739"/>
        <dbReference type="ChEBI" id="CHEBI:13193"/>
        <dbReference type="ChEBI" id="CHEBI:15378"/>
        <dbReference type="ChEBI" id="CHEBI:17319"/>
        <dbReference type="ChEBI" id="CHEBI:17499"/>
        <dbReference type="ChEBI" id="CHEBI:29917"/>
        <dbReference type="ChEBI" id="CHEBI:29961"/>
        <dbReference type="ChEBI" id="CHEBI:57844"/>
        <dbReference type="ChEBI" id="CHEBI:57856"/>
        <dbReference type="ChEBI" id="CHEBI:59789"/>
        <dbReference type="ChEBI" id="CHEBI:64428"/>
        <dbReference type="ChEBI" id="CHEBI:73599"/>
        <dbReference type="EC" id="2.8.4.4"/>
    </reaction>
</comment>
<comment type="cofactor">
    <cofactor evidence="1">
        <name>[4Fe-4S] cluster</name>
        <dbReference type="ChEBI" id="CHEBI:49883"/>
    </cofactor>
    <text evidence="1">Binds 2 [4Fe-4S] clusters. One cluster is coordinated with 3 cysteines and an exchangeable S-adenosyl-L-methionine.</text>
</comment>
<comment type="subcellular location">
    <subcellularLocation>
        <location evidence="1">Cytoplasm</location>
    </subcellularLocation>
</comment>
<comment type="similarity">
    <text evidence="1">Belongs to the methylthiotransferase family. RimO subfamily.</text>
</comment>
<organism>
    <name type="scientific">Escherichia coli O139:H28 (strain E24377A / ETEC)</name>
    <dbReference type="NCBI Taxonomy" id="331111"/>
    <lineage>
        <taxon>Bacteria</taxon>
        <taxon>Pseudomonadati</taxon>
        <taxon>Pseudomonadota</taxon>
        <taxon>Gammaproteobacteria</taxon>
        <taxon>Enterobacterales</taxon>
        <taxon>Enterobacteriaceae</taxon>
        <taxon>Escherichia</taxon>
    </lineage>
</organism>
<proteinExistence type="inferred from homology"/>
<gene>
    <name evidence="1" type="primary">rimO</name>
    <name type="ordered locus">EcE24377A_0906</name>
</gene>
<reference key="1">
    <citation type="journal article" date="2008" name="J. Bacteriol.">
        <title>The pangenome structure of Escherichia coli: comparative genomic analysis of E. coli commensal and pathogenic isolates.</title>
        <authorList>
            <person name="Rasko D.A."/>
            <person name="Rosovitz M.J."/>
            <person name="Myers G.S.A."/>
            <person name="Mongodin E.F."/>
            <person name="Fricke W.F."/>
            <person name="Gajer P."/>
            <person name="Crabtree J."/>
            <person name="Sebaihia M."/>
            <person name="Thomson N.R."/>
            <person name="Chaudhuri R."/>
            <person name="Henderson I.R."/>
            <person name="Sperandio V."/>
            <person name="Ravel J."/>
        </authorList>
    </citation>
    <scope>NUCLEOTIDE SEQUENCE [LARGE SCALE GENOMIC DNA]</scope>
    <source>
        <strain>E24377A / ETEC</strain>
    </source>
</reference>